<protein>
    <recommendedName>
        <fullName evidence="1">Putative membrane protein insertion efficiency factor</fullName>
    </recommendedName>
</protein>
<organism>
    <name type="scientific">Shewanella woodyi (strain ATCC 51908 / MS32)</name>
    <dbReference type="NCBI Taxonomy" id="392500"/>
    <lineage>
        <taxon>Bacteria</taxon>
        <taxon>Pseudomonadati</taxon>
        <taxon>Pseudomonadota</taxon>
        <taxon>Gammaproteobacteria</taxon>
        <taxon>Alteromonadales</taxon>
        <taxon>Shewanellaceae</taxon>
        <taxon>Shewanella</taxon>
    </lineage>
</organism>
<comment type="function">
    <text evidence="1">Could be involved in insertion of integral membrane proteins into the membrane.</text>
</comment>
<comment type="subcellular location">
    <subcellularLocation>
        <location evidence="1">Cell inner membrane</location>
        <topology evidence="1">Peripheral membrane protein</topology>
        <orientation evidence="1">Cytoplasmic side</orientation>
    </subcellularLocation>
</comment>
<comment type="similarity">
    <text evidence="1">Belongs to the UPF0161 family.</text>
</comment>
<dbReference type="EMBL" id="CP000961">
    <property type="protein sequence ID" value="ACA89179.1"/>
    <property type="molecule type" value="Genomic_DNA"/>
</dbReference>
<dbReference type="RefSeq" id="WP_012327495.1">
    <property type="nucleotide sequence ID" value="NC_010506.1"/>
</dbReference>
<dbReference type="STRING" id="392500.Swoo_4930"/>
<dbReference type="KEGG" id="swd:Swoo_4930"/>
<dbReference type="eggNOG" id="COG0759">
    <property type="taxonomic scope" value="Bacteria"/>
</dbReference>
<dbReference type="HOGENOM" id="CLU_144811_5_2_6"/>
<dbReference type="Proteomes" id="UP000002168">
    <property type="component" value="Chromosome"/>
</dbReference>
<dbReference type="GO" id="GO:0005886">
    <property type="term" value="C:plasma membrane"/>
    <property type="evidence" value="ECO:0007669"/>
    <property type="project" value="UniProtKB-SubCell"/>
</dbReference>
<dbReference type="HAMAP" id="MF_00386">
    <property type="entry name" value="UPF0161_YidD"/>
    <property type="match status" value="1"/>
</dbReference>
<dbReference type="InterPro" id="IPR002696">
    <property type="entry name" value="Membr_insert_effic_factor_YidD"/>
</dbReference>
<dbReference type="NCBIfam" id="TIGR00278">
    <property type="entry name" value="membrane protein insertion efficiency factor YidD"/>
    <property type="match status" value="1"/>
</dbReference>
<dbReference type="PANTHER" id="PTHR33383">
    <property type="entry name" value="MEMBRANE PROTEIN INSERTION EFFICIENCY FACTOR-RELATED"/>
    <property type="match status" value="1"/>
</dbReference>
<dbReference type="PANTHER" id="PTHR33383:SF1">
    <property type="entry name" value="MEMBRANE PROTEIN INSERTION EFFICIENCY FACTOR-RELATED"/>
    <property type="match status" value="1"/>
</dbReference>
<dbReference type="Pfam" id="PF01809">
    <property type="entry name" value="YidD"/>
    <property type="match status" value="1"/>
</dbReference>
<dbReference type="SMART" id="SM01234">
    <property type="entry name" value="Haemolytic"/>
    <property type="match status" value="1"/>
</dbReference>
<sequence length="85" mass="9507">MAKTQSPLQWLATTLIRGYQVFISPFLGANKCRFHPTCSTYAIEAIRLHGSVKGCWLAARRILKCHPLHPGGIDPVPPKTHRCNK</sequence>
<proteinExistence type="inferred from homology"/>
<name>YIDD_SHEWM</name>
<evidence type="ECO:0000255" key="1">
    <source>
        <dbReference type="HAMAP-Rule" id="MF_00386"/>
    </source>
</evidence>
<accession>B1KQ66</accession>
<feature type="chain" id="PRO_1000197781" description="Putative membrane protein insertion efficiency factor">
    <location>
        <begin position="1"/>
        <end position="85"/>
    </location>
</feature>
<gene>
    <name type="ordered locus">Swoo_4930</name>
</gene>
<keyword id="KW-0997">Cell inner membrane</keyword>
<keyword id="KW-1003">Cell membrane</keyword>
<keyword id="KW-0472">Membrane</keyword>
<keyword id="KW-1185">Reference proteome</keyword>
<reference key="1">
    <citation type="submission" date="2008-02" db="EMBL/GenBank/DDBJ databases">
        <title>Complete sequence of Shewanella woodyi ATCC 51908.</title>
        <authorList>
            <consortium name="US DOE Joint Genome Institute"/>
            <person name="Copeland A."/>
            <person name="Lucas S."/>
            <person name="Lapidus A."/>
            <person name="Glavina del Rio T."/>
            <person name="Dalin E."/>
            <person name="Tice H."/>
            <person name="Bruce D."/>
            <person name="Goodwin L."/>
            <person name="Pitluck S."/>
            <person name="Sims D."/>
            <person name="Brettin T."/>
            <person name="Detter J.C."/>
            <person name="Han C."/>
            <person name="Kuske C.R."/>
            <person name="Schmutz J."/>
            <person name="Larimer F."/>
            <person name="Land M."/>
            <person name="Hauser L."/>
            <person name="Kyrpides N."/>
            <person name="Lykidis A."/>
            <person name="Zhao J.-S."/>
            <person name="Richardson P."/>
        </authorList>
    </citation>
    <scope>NUCLEOTIDE SEQUENCE [LARGE SCALE GENOMIC DNA]</scope>
    <source>
        <strain>ATCC 51908 / MS32</strain>
    </source>
</reference>